<organism>
    <name type="scientific">Bos taurus</name>
    <name type="common">Bovine</name>
    <dbReference type="NCBI Taxonomy" id="9913"/>
    <lineage>
        <taxon>Eukaryota</taxon>
        <taxon>Metazoa</taxon>
        <taxon>Chordata</taxon>
        <taxon>Craniata</taxon>
        <taxon>Vertebrata</taxon>
        <taxon>Euteleostomi</taxon>
        <taxon>Mammalia</taxon>
        <taxon>Eutheria</taxon>
        <taxon>Laurasiatheria</taxon>
        <taxon>Artiodactyla</taxon>
        <taxon>Ruminantia</taxon>
        <taxon>Pecora</taxon>
        <taxon>Bovidae</taxon>
        <taxon>Bovinae</taxon>
        <taxon>Bos</taxon>
    </lineage>
</organism>
<name>CTHL1_BOVIN</name>
<protein>
    <recommendedName>
        <fullName>Cathelicidin-1</fullName>
    </recommendedName>
    <alternativeName>
        <fullName>Bactenecin-1</fullName>
        <shortName>Bac1</shortName>
    </alternativeName>
    <alternativeName>
        <fullName>Cyclic dodecapeptide</fullName>
    </alternativeName>
</protein>
<comment type="function">
    <text>Potent microbicidal activity; active against S.aureus and E.coli.</text>
</comment>
<comment type="subcellular location">
    <subcellularLocation>
        <location>Secreted</location>
    </subcellularLocation>
</comment>
<comment type="tissue specificity">
    <text>Large granules of neutrophils.</text>
</comment>
<comment type="similarity">
    <text evidence="6">Belongs to the cathelicidin family.</text>
</comment>
<gene>
    <name type="primary">CATHL1</name>
    <name type="synonym">BAC1</name>
</gene>
<feature type="signal peptide" evidence="2">
    <location>
        <begin position="1"/>
        <end position="29"/>
    </location>
</feature>
<feature type="propeptide" id="PRO_0000004696" evidence="3">
    <location>
        <begin position="30"/>
        <end position="143"/>
    </location>
</feature>
<feature type="peptide" id="PRO_0000004697" description="Cathelicidin-1">
    <location>
        <begin position="144"/>
        <end position="155"/>
    </location>
</feature>
<feature type="modified residue" description="Pyrrolidone carboxylic acid" evidence="4">
    <location>
        <position position="30"/>
    </location>
</feature>
<feature type="disulfide bond" evidence="1">
    <location>
        <begin position="85"/>
        <end position="96"/>
    </location>
</feature>
<feature type="disulfide bond" evidence="1">
    <location>
        <begin position="107"/>
        <end position="124"/>
    </location>
</feature>
<feature type="disulfide bond" evidence="3">
    <location>
        <begin position="146"/>
        <end position="154"/>
    </location>
</feature>
<feature type="sequence variant" evidence="5">
    <original>Q</original>
    <variation>R</variation>
    <location>
        <position position="128"/>
    </location>
</feature>
<sequence length="155" mass="17600">METPRASLSLGRWSLWLLLLGLALPSASAQALSYREAVLRAVDQLNEQSSEPNIYRLLELDQPPQDDEDPDSPKRVSFRVKETVCSRTTQQPPEQCDFKENGLLKRCEGTVTLDQVRGNFDITCNNHQSIRITKQPWAPPQAARLCRIVVIRVCR</sequence>
<proteinExistence type="evidence at protein level"/>
<dbReference type="EMBL" id="L08834">
    <property type="protein sequence ID" value="AAA50615.1"/>
    <property type="molecule type" value="mRNA"/>
</dbReference>
<dbReference type="EMBL" id="Y09472">
    <property type="protein sequence ID" value="CAA70617.1"/>
    <property type="molecule type" value="Genomic_DNA"/>
</dbReference>
<dbReference type="EMBL" id="BC114189">
    <property type="protein sequence ID" value="AAI14190.1"/>
    <property type="molecule type" value="mRNA"/>
</dbReference>
<dbReference type="EMBL" id="BC142024">
    <property type="protein sequence ID" value="AAI42025.1"/>
    <property type="molecule type" value="mRNA"/>
</dbReference>
<dbReference type="PIR" id="S27018">
    <property type="entry name" value="S27018"/>
</dbReference>
<dbReference type="RefSeq" id="NP_777250.1">
    <property type="nucleotide sequence ID" value="NM_174825.1"/>
</dbReference>
<dbReference type="RefSeq" id="XP_015315138.1">
    <property type="nucleotide sequence ID" value="XM_015459652.1"/>
</dbReference>
<dbReference type="RefSeq" id="XP_015324278.1">
    <property type="nucleotide sequence ID" value="XM_015468792.1"/>
</dbReference>
<dbReference type="SMR" id="P22226"/>
<dbReference type="FunCoup" id="P22226">
    <property type="interactions" value="183"/>
</dbReference>
<dbReference type="PaxDb" id="9913-ENSBTAP00000026750"/>
<dbReference type="PeptideAtlas" id="P22226"/>
<dbReference type="Ensembl" id="ENSBTAT00000026750.6">
    <property type="protein sequence ID" value="ENSBTAP00000026750.4"/>
    <property type="gene ID" value="ENSBTAG00000013356.7"/>
</dbReference>
<dbReference type="GeneID" id="282164"/>
<dbReference type="KEGG" id="bta:282164"/>
<dbReference type="CTD" id="282164"/>
<dbReference type="VEuPathDB" id="HostDB:ENSBTAG00000013356"/>
<dbReference type="eggNOG" id="ENOG502SAES">
    <property type="taxonomic scope" value="Eukaryota"/>
</dbReference>
<dbReference type="GeneTree" id="ENSGT00390000000410"/>
<dbReference type="HOGENOM" id="CLU_121724_1_1_1"/>
<dbReference type="InParanoid" id="P22226"/>
<dbReference type="OrthoDB" id="9714232at2759"/>
<dbReference type="TreeFam" id="TF338457"/>
<dbReference type="Proteomes" id="UP000009136">
    <property type="component" value="Chromosome 22"/>
</dbReference>
<dbReference type="Bgee" id="ENSBTAG00000013356">
    <property type="expression patterns" value="Expressed in thymus and 51 other cell types or tissues"/>
</dbReference>
<dbReference type="GO" id="GO:0005615">
    <property type="term" value="C:extracellular space"/>
    <property type="evidence" value="ECO:0000318"/>
    <property type="project" value="GO_Central"/>
</dbReference>
<dbReference type="GO" id="GO:0001530">
    <property type="term" value="F:lipopolysaccharide binding"/>
    <property type="evidence" value="ECO:0000318"/>
    <property type="project" value="GO_Central"/>
</dbReference>
<dbReference type="GO" id="GO:0061844">
    <property type="term" value="P:antimicrobial humoral immune response mediated by antimicrobial peptide"/>
    <property type="evidence" value="ECO:0000318"/>
    <property type="project" value="GO_Central"/>
</dbReference>
<dbReference type="GO" id="GO:0050829">
    <property type="term" value="P:defense response to Gram-negative bacterium"/>
    <property type="evidence" value="ECO:0000315"/>
    <property type="project" value="AgBase"/>
</dbReference>
<dbReference type="GO" id="GO:0050830">
    <property type="term" value="P:defense response to Gram-positive bacterium"/>
    <property type="evidence" value="ECO:0000315"/>
    <property type="project" value="AgBase"/>
</dbReference>
<dbReference type="GO" id="GO:0045087">
    <property type="term" value="P:innate immune response"/>
    <property type="evidence" value="ECO:0000318"/>
    <property type="project" value="GO_Central"/>
</dbReference>
<dbReference type="FunFam" id="3.10.450.10:FF:000003">
    <property type="entry name" value="Cathelicidin antimicrobial peptide"/>
    <property type="match status" value="1"/>
</dbReference>
<dbReference type="Gene3D" id="3.10.450.10">
    <property type="match status" value="1"/>
</dbReference>
<dbReference type="InterPro" id="IPR001894">
    <property type="entry name" value="Cathelicidin-like"/>
</dbReference>
<dbReference type="InterPro" id="IPR018216">
    <property type="entry name" value="Cathelicidin_CS"/>
</dbReference>
<dbReference type="InterPro" id="IPR046350">
    <property type="entry name" value="Cystatin_sf"/>
</dbReference>
<dbReference type="PANTHER" id="PTHR10206">
    <property type="entry name" value="CATHELICIDIN"/>
    <property type="match status" value="1"/>
</dbReference>
<dbReference type="PANTHER" id="PTHR10206:SF2">
    <property type="entry name" value="CATHELICIDIN ANTIMICROBIAL PEPTIDE"/>
    <property type="match status" value="1"/>
</dbReference>
<dbReference type="Pfam" id="PF00666">
    <property type="entry name" value="Cathelicidins"/>
    <property type="match status" value="1"/>
</dbReference>
<dbReference type="SUPFAM" id="SSF54403">
    <property type="entry name" value="Cystatin/monellin"/>
    <property type="match status" value="1"/>
</dbReference>
<dbReference type="PROSITE" id="PS00946">
    <property type="entry name" value="CATHELICIDINS_1"/>
    <property type="match status" value="1"/>
</dbReference>
<dbReference type="PROSITE" id="PS00947">
    <property type="entry name" value="CATHELICIDINS_2"/>
    <property type="match status" value="1"/>
</dbReference>
<reference key="1">
    <citation type="journal article" date="1992" name="FEBS Lett.">
        <title>cDNA sequence analysis of an antibiotic dodecapeptide from neutrophils.</title>
        <authorList>
            <person name="Storici P."/>
            <person name="del Sal G."/>
            <person name="Schneider C."/>
            <person name="Zanetti M."/>
        </authorList>
    </citation>
    <scope>NUCLEOTIDE SEQUENCE [MRNA]</scope>
    <source>
        <tissue>Bone marrow</tissue>
    </source>
</reference>
<reference key="2">
    <citation type="submission" date="1996-12" db="EMBL/GenBank/DDBJ databases">
        <authorList>
            <person name="Scocchi M."/>
            <person name="Wang S."/>
            <person name="Zanetti M."/>
        </authorList>
    </citation>
    <scope>NUCLEOTIDE SEQUENCE [GENOMIC DNA]</scope>
    <source>
        <tissue>Liver</tissue>
    </source>
</reference>
<reference key="3">
    <citation type="submission" date="2007-06" db="EMBL/GenBank/DDBJ databases">
        <authorList>
            <consortium name="NIH - Mammalian Gene Collection (MGC) project"/>
        </authorList>
    </citation>
    <scope>NUCLEOTIDE SEQUENCE [LARGE SCALE MRNA]</scope>
    <scope>VARIANT ARG-128</scope>
    <source>
        <strain>Hereford</strain>
        <tissue>Thymus</tissue>
    </source>
</reference>
<reference key="4">
    <citation type="journal article" date="1988" name="J. Biol. Chem.">
        <title>Structure and bactericidal activity of an antibiotic dodecapeptide purified from bovine neutrophils.</title>
        <authorList>
            <person name="Romeo D."/>
            <person name="Skerlavaj B."/>
            <person name="Bolognesi M."/>
            <person name="Gennaro R."/>
        </authorList>
    </citation>
    <scope>PROTEIN SEQUENCE OF 144-155</scope>
    <source>
        <tissue>Neutrophil</tissue>
    </source>
</reference>
<reference key="5">
    <citation type="journal article" date="1996" name="Eur. J. Biochem.">
        <title>Purification and structural characterization of bovine cathelicidins, precursors of antimicrobial peptides.</title>
        <authorList>
            <person name="Storici P."/>
            <person name="Tossi A."/>
            <person name="Lenarcic B."/>
            <person name="Romeo D."/>
        </authorList>
    </citation>
    <scope>CHARACTERIZATION</scope>
    <scope>PYROGLUTAMATE FORMATION AT GLN-30</scope>
</reference>
<accession>P22226</accession>
<accession>A5PJA3</accession>
<accession>Q24JY5</accession>
<keyword id="KW-0044">Antibiotic</keyword>
<keyword id="KW-0929">Antimicrobial</keyword>
<keyword id="KW-0903">Direct protein sequencing</keyword>
<keyword id="KW-1015">Disulfide bond</keyword>
<keyword id="KW-0873">Pyrrolidone carboxylic acid</keyword>
<keyword id="KW-1185">Reference proteome</keyword>
<keyword id="KW-0964">Secreted</keyword>
<keyword id="KW-0732">Signal</keyword>
<evidence type="ECO:0000250" key="1"/>
<evidence type="ECO:0000255" key="2"/>
<evidence type="ECO:0000269" key="3">
    <source>
    </source>
</evidence>
<evidence type="ECO:0000269" key="4">
    <source>
    </source>
</evidence>
<evidence type="ECO:0000269" key="5">
    <source ref="3"/>
</evidence>
<evidence type="ECO:0000305" key="6"/>